<protein>
    <recommendedName>
        <fullName evidence="3">Anaerobic nitrite reductase GLB1</fullName>
        <ecNumber evidence="3">1.7.2.-</ecNumber>
    </recommendedName>
    <alternativeName>
        <fullName>Non-symbiotic hemoglobin</fullName>
    </alternativeName>
    <alternativeName>
        <fullName>TREto GLB1</fullName>
    </alternativeName>
</protein>
<feature type="chain" id="PRO_0000193026" description="Anaerobic nitrite reductase GLB1">
    <location>
        <begin position="1"/>
        <end position="161"/>
    </location>
</feature>
<feature type="domain" description="Globin" evidence="6">
    <location>
        <begin position="9"/>
        <end position="157"/>
    </location>
</feature>
<feature type="short sequence motif" description="Homodimerization" evidence="7 10">
    <location>
        <begin position="42"/>
        <end position="46"/>
    </location>
</feature>
<feature type="short sequence motif" description="Homodimerization" evidence="7 10">
    <location>
        <begin position="112"/>
        <end position="123"/>
    </location>
</feature>
<feature type="binding site" evidence="7 10">
    <location>
        <position position="52"/>
    </location>
    <ligand>
        <name>heme b</name>
        <dbReference type="ChEBI" id="CHEBI:60344"/>
    </ligand>
</feature>
<feature type="binding site" evidence="3">
    <location>
        <position position="66"/>
    </location>
    <ligand>
        <name>heme b</name>
        <dbReference type="ChEBI" id="CHEBI:60344"/>
    </ligand>
</feature>
<feature type="binding site" description="distal binding residue" evidence="6 7 10">
    <location>
        <position position="70"/>
    </location>
    <ligand>
        <name>heme b</name>
        <dbReference type="ChEBI" id="CHEBI:60344"/>
    </ligand>
    <ligandPart>
        <name>Fe</name>
        <dbReference type="ChEBI" id="CHEBI:18248"/>
    </ligandPart>
</feature>
<feature type="binding site" evidence="7 10">
    <location>
        <position position="100"/>
    </location>
    <ligand>
        <name>heme b</name>
        <dbReference type="ChEBI" id="CHEBI:60344"/>
    </ligand>
</feature>
<feature type="binding site" description="proximal binding residue" evidence="6 7 10">
    <location>
        <position position="105"/>
    </location>
    <ligand>
        <name>heme b</name>
        <dbReference type="ChEBI" id="CHEBI:60344"/>
    </ligand>
    <ligandPart>
        <name>Fe</name>
        <dbReference type="ChEBI" id="CHEBI:18248"/>
    </ligandPart>
</feature>
<feature type="site" description="Homodimerization" evidence="7 10">
    <location>
        <position position="138"/>
    </location>
</feature>
<feature type="helix" evidence="11">
    <location>
        <begin position="12"/>
        <end position="25"/>
    </location>
</feature>
<feature type="helix" evidence="11">
    <location>
        <begin position="26"/>
        <end position="28"/>
    </location>
</feature>
<feature type="helix" evidence="11">
    <location>
        <begin position="29"/>
        <end position="43"/>
    </location>
</feature>
<feature type="helix" evidence="11">
    <location>
        <begin position="45"/>
        <end position="50"/>
    </location>
</feature>
<feature type="helix" evidence="11">
    <location>
        <begin position="52"/>
        <end position="54"/>
    </location>
</feature>
<feature type="helix" evidence="11">
    <location>
        <begin position="61"/>
        <end position="63"/>
    </location>
</feature>
<feature type="helix" evidence="11">
    <location>
        <begin position="67"/>
        <end position="87"/>
    </location>
</feature>
<feature type="helix" evidence="11">
    <location>
        <begin position="95"/>
        <end position="107"/>
    </location>
</feature>
<feature type="helix" evidence="11">
    <location>
        <begin position="112"/>
        <end position="128"/>
    </location>
</feature>
<feature type="turn" evidence="11">
    <location>
        <begin position="130"/>
        <end position="132"/>
    </location>
</feature>
<feature type="helix" evidence="11">
    <location>
        <begin position="135"/>
        <end position="154"/>
    </location>
</feature>
<sequence>MSSSEVDKVFTEEQEALVVKSWAVMKKNSAELGLKFFLKIFEIAPSAKNLFSYLKDSPIPLEQNPKLKPHAMTVFVMTCESAVQLRKAGKVTVRESNLKRLGAIHFKNGVVNEHFETRFALLETIKEAVPEMWSPEMKNAWGEAYDQLVAAIKSEMKPSST</sequence>
<evidence type="ECO:0000250" key="1">
    <source>
        <dbReference type="UniProtKB" id="A2XE98"/>
    </source>
</evidence>
<evidence type="ECO:0000250" key="2">
    <source>
        <dbReference type="UniProtKB" id="I3SPW2"/>
    </source>
</evidence>
<evidence type="ECO:0000250" key="3">
    <source>
        <dbReference type="UniProtKB" id="O04986"/>
    </source>
</evidence>
<evidence type="ECO:0000250" key="4">
    <source>
        <dbReference type="UniProtKB" id="Q3C1F4"/>
    </source>
</evidence>
<evidence type="ECO:0000250" key="5">
    <source>
        <dbReference type="UniProtKB" id="Q42831"/>
    </source>
</evidence>
<evidence type="ECO:0000255" key="6">
    <source>
        <dbReference type="PROSITE-ProRule" id="PRU00238"/>
    </source>
</evidence>
<evidence type="ECO:0000269" key="7">
    <source>
    </source>
</evidence>
<evidence type="ECO:0000269" key="8">
    <source>
    </source>
</evidence>
<evidence type="ECO:0000305" key="9"/>
<evidence type="ECO:0007744" key="10">
    <source>
        <dbReference type="PDB" id="3QQQ"/>
    </source>
</evidence>
<evidence type="ECO:0007829" key="11">
    <source>
        <dbReference type="PDB" id="3QQQ"/>
    </source>
</evidence>
<gene>
    <name type="primary">GLB1</name>
</gene>
<dbReference type="EC" id="1.7.2.-" evidence="3"/>
<dbReference type="EMBL" id="Y00296">
    <property type="protein sequence ID" value="CAA68405.1"/>
    <property type="molecule type" value="Genomic_DNA"/>
</dbReference>
<dbReference type="PIR" id="S00838">
    <property type="entry name" value="S00838"/>
</dbReference>
<dbReference type="PDB" id="3QQQ">
    <property type="method" value="X-ray"/>
    <property type="resolution" value="1.84 A"/>
    <property type="chains" value="A/B=1-161"/>
</dbReference>
<dbReference type="PDBsum" id="3QQQ"/>
<dbReference type="SMR" id="P07803"/>
<dbReference type="EvolutionaryTrace" id="P07803"/>
<dbReference type="GO" id="GO:0005737">
    <property type="term" value="C:cytoplasm"/>
    <property type="evidence" value="ECO:0007669"/>
    <property type="project" value="UniProtKB-SubCell"/>
</dbReference>
<dbReference type="GO" id="GO:0005634">
    <property type="term" value="C:nucleus"/>
    <property type="evidence" value="ECO:0007669"/>
    <property type="project" value="UniProtKB-SubCell"/>
</dbReference>
<dbReference type="GO" id="GO:0020037">
    <property type="term" value="F:heme binding"/>
    <property type="evidence" value="ECO:0007669"/>
    <property type="project" value="InterPro"/>
</dbReference>
<dbReference type="GO" id="GO:0046872">
    <property type="term" value="F:metal ion binding"/>
    <property type="evidence" value="ECO:0007669"/>
    <property type="project" value="UniProtKB-KW"/>
</dbReference>
<dbReference type="GO" id="GO:0016491">
    <property type="term" value="F:oxidoreductase activity"/>
    <property type="evidence" value="ECO:0007669"/>
    <property type="project" value="UniProtKB-KW"/>
</dbReference>
<dbReference type="GO" id="GO:0019825">
    <property type="term" value="F:oxygen binding"/>
    <property type="evidence" value="ECO:0007669"/>
    <property type="project" value="InterPro"/>
</dbReference>
<dbReference type="CDD" id="cd14784">
    <property type="entry name" value="class1_nsHb-like"/>
    <property type="match status" value="1"/>
</dbReference>
<dbReference type="Gene3D" id="1.10.490.10">
    <property type="entry name" value="Globins"/>
    <property type="match status" value="1"/>
</dbReference>
<dbReference type="InterPro" id="IPR000971">
    <property type="entry name" value="Globin"/>
</dbReference>
<dbReference type="InterPro" id="IPR009050">
    <property type="entry name" value="Globin-like_sf"/>
</dbReference>
<dbReference type="InterPro" id="IPR012292">
    <property type="entry name" value="Globin/Proto"/>
</dbReference>
<dbReference type="InterPro" id="IPR001032">
    <property type="entry name" value="Leghaemoglobin-like"/>
</dbReference>
<dbReference type="InterPro" id="IPR019824">
    <property type="entry name" value="Leghaemoglobin_Fe_BS"/>
</dbReference>
<dbReference type="PANTHER" id="PTHR22924">
    <property type="entry name" value="LEGHEMOGLOBIN-RELATED"/>
    <property type="match status" value="1"/>
</dbReference>
<dbReference type="PANTHER" id="PTHR22924:SF39">
    <property type="entry name" value="NON-SYMBIOTIC HEMOGLOBIN 1"/>
    <property type="match status" value="1"/>
</dbReference>
<dbReference type="Pfam" id="PF00042">
    <property type="entry name" value="Globin"/>
    <property type="match status" value="1"/>
</dbReference>
<dbReference type="PRINTS" id="PR00188">
    <property type="entry name" value="PLANTGLOBIN"/>
</dbReference>
<dbReference type="SUPFAM" id="SSF46458">
    <property type="entry name" value="Globin-like"/>
    <property type="match status" value="1"/>
</dbReference>
<dbReference type="PROSITE" id="PS01033">
    <property type="entry name" value="GLOBIN"/>
    <property type="match status" value="1"/>
</dbReference>
<dbReference type="PROSITE" id="PS00208">
    <property type="entry name" value="PLANT_GLOBIN"/>
    <property type="match status" value="1"/>
</dbReference>
<organism>
    <name type="scientific">Trema tomentosum</name>
    <name type="common">Peach-leaf poison-bush</name>
    <name type="synonym">Celtis tomentosa</name>
    <dbReference type="NCBI Taxonomy" id="3480"/>
    <lineage>
        <taxon>Eukaryota</taxon>
        <taxon>Viridiplantae</taxon>
        <taxon>Streptophyta</taxon>
        <taxon>Embryophyta</taxon>
        <taxon>Tracheophyta</taxon>
        <taxon>Spermatophyta</taxon>
        <taxon>Magnoliopsida</taxon>
        <taxon>eudicotyledons</taxon>
        <taxon>Gunneridae</taxon>
        <taxon>Pentapetalae</taxon>
        <taxon>rosids</taxon>
        <taxon>fabids</taxon>
        <taxon>Rosales</taxon>
        <taxon>Cannabaceae</taxon>
        <taxon>Trema</taxon>
    </lineage>
</organism>
<comment type="function">
    <text evidence="2 3 4 5">Phytoglobin that reduces nitrite to nitric oxide (NO) under anoxic conditions (e.g. during flooding or in waterlogged soil) and upon root nodulation (By similarity). Required for general plant development and during nodulation, especially for the onset of symbiosis (By similarity). Monitors nitric oxide (NO) levels during early phase of the nitrogen-fixing symbiosis and buffers oxygen in functioning nodules (By similarity). May not function as an oxygen storage or transport protein (By similarity). Has an unusually high affinity for O(2) through a hexacoordinate heme iron because of a very low dissociation constant (By similarity).</text>
</comment>
<comment type="catalytic activity">
    <reaction evidence="3">
        <text>Fe(III)-heme b-[protein] + nitric oxide + H2O = Fe(II)-heme b-[protein] + nitrite + 2 H(+)</text>
        <dbReference type="Rhea" id="RHEA:77711"/>
        <dbReference type="Rhea" id="RHEA-COMP:18975"/>
        <dbReference type="Rhea" id="RHEA-COMP:18976"/>
        <dbReference type="ChEBI" id="CHEBI:15377"/>
        <dbReference type="ChEBI" id="CHEBI:15378"/>
        <dbReference type="ChEBI" id="CHEBI:16301"/>
        <dbReference type="ChEBI" id="CHEBI:16480"/>
        <dbReference type="ChEBI" id="CHEBI:55376"/>
        <dbReference type="ChEBI" id="CHEBI:60344"/>
    </reaction>
    <physiologicalReaction direction="right-to-left" evidence="3">
        <dbReference type="Rhea" id="RHEA:77713"/>
    </physiologicalReaction>
</comment>
<comment type="cofactor">
    <cofactor evidence="7">
        <name>heme b</name>
        <dbReference type="ChEBI" id="CHEBI:60344"/>
    </cofactor>
    <text evidence="7">Binds 1 heme group per subunit.</text>
</comment>
<comment type="subunit">
    <text evidence="7 8">Homodimer.</text>
</comment>
<comment type="subcellular location">
    <subcellularLocation>
        <location evidence="1">Cytoplasm</location>
    </subcellularLocation>
    <subcellularLocation>
        <location evidence="1">Nucleus</location>
    </subcellularLocation>
</comment>
<comment type="tissue specificity">
    <text evidence="8">Root specific.</text>
</comment>
<comment type="similarity">
    <text evidence="9">Belongs to the plant globin family.</text>
</comment>
<reference key="1">
    <citation type="journal article" date="1988" name="Nature">
        <title>Functioning haemoglobin genes in non-nodulating plants.</title>
        <authorList>
            <person name="Bogusz D."/>
            <person name="Appleby C.A."/>
            <person name="Landsmann J."/>
            <person name="Dennis E.S."/>
            <person name="Trinick M.J."/>
            <person name="Peacock W.J."/>
        </authorList>
    </citation>
    <scope>NUCLEOTIDE SEQUENCE [GENOMIC DNA]</scope>
    <scope>SUBUNIT</scope>
    <scope>TISSUE SPECIFICITY</scope>
</reference>
<reference key="2">
    <citation type="journal article" date="2011" name="Biochemistry">
        <title>Crystal structures of Parasponia and Trema hemoglobins: differential heme coordination is linked to quaternary structure.</title>
        <authorList>
            <person name="Kakar S."/>
            <person name="Sturms R."/>
            <person name="Tiffany A."/>
            <person name="Nix J.C."/>
            <person name="DiSpirito A.A."/>
            <person name="Hargrove M.S."/>
        </authorList>
    </citation>
    <scope>X-RAY CRYSTALLOGRAPHY (1.84 ANGSTROMS) IN COMPLEX WITH HEME B</scope>
    <scope>HOMODIMER</scope>
    <scope>COFACTOR</scope>
</reference>
<name>HBL_TRETO</name>
<proteinExistence type="evidence at protein level"/>
<accession>P07803</accession>
<keyword id="KW-0002">3D-structure</keyword>
<keyword id="KW-0963">Cytoplasm</keyword>
<keyword id="KW-0349">Heme</keyword>
<keyword id="KW-0408">Iron</keyword>
<keyword id="KW-0479">Metal-binding</keyword>
<keyword id="KW-0539">Nucleus</keyword>
<keyword id="KW-0560">Oxidoreductase</keyword>